<gene>
    <name evidence="1" type="primary">coaD</name>
    <name type="ordered locus">M28_Spy1205</name>
</gene>
<comment type="function">
    <text evidence="1">Reversibly transfers an adenylyl group from ATP to 4'-phosphopantetheine, yielding dephospho-CoA (dPCoA) and pyrophosphate.</text>
</comment>
<comment type="catalytic activity">
    <reaction evidence="1">
        <text>(R)-4'-phosphopantetheine + ATP + H(+) = 3'-dephospho-CoA + diphosphate</text>
        <dbReference type="Rhea" id="RHEA:19801"/>
        <dbReference type="ChEBI" id="CHEBI:15378"/>
        <dbReference type="ChEBI" id="CHEBI:30616"/>
        <dbReference type="ChEBI" id="CHEBI:33019"/>
        <dbReference type="ChEBI" id="CHEBI:57328"/>
        <dbReference type="ChEBI" id="CHEBI:61723"/>
        <dbReference type="EC" id="2.7.7.3"/>
    </reaction>
</comment>
<comment type="cofactor">
    <cofactor evidence="1">
        <name>Mg(2+)</name>
        <dbReference type="ChEBI" id="CHEBI:18420"/>
    </cofactor>
</comment>
<comment type="pathway">
    <text evidence="1">Cofactor biosynthesis; coenzyme A biosynthesis; CoA from (R)-pantothenate: step 4/5.</text>
</comment>
<comment type="subunit">
    <text evidence="1">Homohexamer.</text>
</comment>
<comment type="subcellular location">
    <subcellularLocation>
        <location evidence="1">Cytoplasm</location>
    </subcellularLocation>
</comment>
<comment type="similarity">
    <text evidence="1">Belongs to the bacterial CoaD family.</text>
</comment>
<sequence length="163" mass="18629">MLTKIGLYTGSFDPVTNGHLDIVKRASGLFDQIYVGIFDNPTKKSYFKLEVRKAMLTQALADFTNVIVVTSHERLAIDVAKELRVTHLIRGLRNATDFEYEENLEYFNHLLAPNIETVYLISRNKWQALSSSRVRELIHFQSSLEGLVPQSVIAQVEKMNEKT</sequence>
<feature type="chain" id="PRO_1000011256" description="Phosphopantetheine adenylyltransferase">
    <location>
        <begin position="1"/>
        <end position="163"/>
    </location>
</feature>
<feature type="binding site" evidence="1">
    <location>
        <begin position="11"/>
        <end position="12"/>
    </location>
    <ligand>
        <name>ATP</name>
        <dbReference type="ChEBI" id="CHEBI:30616"/>
    </ligand>
</feature>
<feature type="binding site" evidence="1">
    <location>
        <position position="11"/>
    </location>
    <ligand>
        <name>substrate</name>
    </ligand>
</feature>
<feature type="binding site" evidence="1">
    <location>
        <position position="19"/>
    </location>
    <ligand>
        <name>ATP</name>
        <dbReference type="ChEBI" id="CHEBI:30616"/>
    </ligand>
</feature>
<feature type="binding site" evidence="1">
    <location>
        <position position="43"/>
    </location>
    <ligand>
        <name>substrate</name>
    </ligand>
</feature>
<feature type="binding site" evidence="1">
    <location>
        <position position="76"/>
    </location>
    <ligand>
        <name>substrate</name>
    </ligand>
</feature>
<feature type="binding site" evidence="1">
    <location>
        <position position="90"/>
    </location>
    <ligand>
        <name>substrate</name>
    </ligand>
</feature>
<feature type="binding site" evidence="1">
    <location>
        <begin position="91"/>
        <end position="93"/>
    </location>
    <ligand>
        <name>ATP</name>
        <dbReference type="ChEBI" id="CHEBI:30616"/>
    </ligand>
</feature>
<feature type="binding site" evidence="1">
    <location>
        <position position="101"/>
    </location>
    <ligand>
        <name>ATP</name>
        <dbReference type="ChEBI" id="CHEBI:30616"/>
    </ligand>
</feature>
<feature type="binding site" evidence="1">
    <location>
        <begin position="126"/>
        <end position="132"/>
    </location>
    <ligand>
        <name>ATP</name>
        <dbReference type="ChEBI" id="CHEBI:30616"/>
    </ligand>
</feature>
<feature type="site" description="Transition state stabilizer" evidence="1">
    <location>
        <position position="19"/>
    </location>
</feature>
<protein>
    <recommendedName>
        <fullName evidence="1">Phosphopantetheine adenylyltransferase</fullName>
        <ecNumber evidence="1">2.7.7.3</ecNumber>
    </recommendedName>
    <alternativeName>
        <fullName evidence="1">Dephospho-CoA pyrophosphorylase</fullName>
    </alternativeName>
    <alternativeName>
        <fullName evidence="1">Pantetheine-phosphate adenylyltransferase</fullName>
        <shortName evidence="1">PPAT</shortName>
    </alternativeName>
</protein>
<proteinExistence type="inferred from homology"/>
<dbReference type="EC" id="2.7.7.3" evidence="1"/>
<dbReference type="EMBL" id="CP000056">
    <property type="protein sequence ID" value="AAX72315.1"/>
    <property type="molecule type" value="Genomic_DNA"/>
</dbReference>
<dbReference type="RefSeq" id="WP_002983821.1">
    <property type="nucleotide sequence ID" value="NC_007296.2"/>
</dbReference>
<dbReference type="SMR" id="Q48SJ5"/>
<dbReference type="GeneID" id="69900575"/>
<dbReference type="KEGG" id="spb:M28_Spy1205"/>
<dbReference type="HOGENOM" id="CLU_100149_0_1_9"/>
<dbReference type="UniPathway" id="UPA00241">
    <property type="reaction ID" value="UER00355"/>
</dbReference>
<dbReference type="GO" id="GO:0005737">
    <property type="term" value="C:cytoplasm"/>
    <property type="evidence" value="ECO:0007669"/>
    <property type="project" value="UniProtKB-SubCell"/>
</dbReference>
<dbReference type="GO" id="GO:0005524">
    <property type="term" value="F:ATP binding"/>
    <property type="evidence" value="ECO:0007669"/>
    <property type="project" value="UniProtKB-KW"/>
</dbReference>
<dbReference type="GO" id="GO:0004595">
    <property type="term" value="F:pantetheine-phosphate adenylyltransferase activity"/>
    <property type="evidence" value="ECO:0007669"/>
    <property type="project" value="UniProtKB-UniRule"/>
</dbReference>
<dbReference type="GO" id="GO:0015937">
    <property type="term" value="P:coenzyme A biosynthetic process"/>
    <property type="evidence" value="ECO:0007669"/>
    <property type="project" value="UniProtKB-UniRule"/>
</dbReference>
<dbReference type="CDD" id="cd02163">
    <property type="entry name" value="PPAT"/>
    <property type="match status" value="1"/>
</dbReference>
<dbReference type="Gene3D" id="3.40.50.620">
    <property type="entry name" value="HUPs"/>
    <property type="match status" value="1"/>
</dbReference>
<dbReference type="HAMAP" id="MF_00151">
    <property type="entry name" value="PPAT_bact"/>
    <property type="match status" value="1"/>
</dbReference>
<dbReference type="InterPro" id="IPR004821">
    <property type="entry name" value="Cyt_trans-like"/>
</dbReference>
<dbReference type="InterPro" id="IPR001980">
    <property type="entry name" value="PPAT"/>
</dbReference>
<dbReference type="InterPro" id="IPR014729">
    <property type="entry name" value="Rossmann-like_a/b/a_fold"/>
</dbReference>
<dbReference type="NCBIfam" id="TIGR01510">
    <property type="entry name" value="coaD_prev_kdtB"/>
    <property type="match status" value="1"/>
</dbReference>
<dbReference type="NCBIfam" id="TIGR00125">
    <property type="entry name" value="cyt_tran_rel"/>
    <property type="match status" value="1"/>
</dbReference>
<dbReference type="PANTHER" id="PTHR21342">
    <property type="entry name" value="PHOSPHOPANTETHEINE ADENYLYLTRANSFERASE"/>
    <property type="match status" value="1"/>
</dbReference>
<dbReference type="PANTHER" id="PTHR21342:SF1">
    <property type="entry name" value="PHOSPHOPANTETHEINE ADENYLYLTRANSFERASE"/>
    <property type="match status" value="1"/>
</dbReference>
<dbReference type="Pfam" id="PF01467">
    <property type="entry name" value="CTP_transf_like"/>
    <property type="match status" value="1"/>
</dbReference>
<dbReference type="PRINTS" id="PR01020">
    <property type="entry name" value="LPSBIOSNTHSS"/>
</dbReference>
<dbReference type="SUPFAM" id="SSF52374">
    <property type="entry name" value="Nucleotidylyl transferase"/>
    <property type="match status" value="1"/>
</dbReference>
<organism>
    <name type="scientific">Streptococcus pyogenes serotype M28 (strain MGAS6180)</name>
    <dbReference type="NCBI Taxonomy" id="319701"/>
    <lineage>
        <taxon>Bacteria</taxon>
        <taxon>Bacillati</taxon>
        <taxon>Bacillota</taxon>
        <taxon>Bacilli</taxon>
        <taxon>Lactobacillales</taxon>
        <taxon>Streptococcaceae</taxon>
        <taxon>Streptococcus</taxon>
    </lineage>
</organism>
<accession>Q48SJ5</accession>
<evidence type="ECO:0000255" key="1">
    <source>
        <dbReference type="HAMAP-Rule" id="MF_00151"/>
    </source>
</evidence>
<name>COAD_STRPM</name>
<keyword id="KW-0067">ATP-binding</keyword>
<keyword id="KW-0173">Coenzyme A biosynthesis</keyword>
<keyword id="KW-0963">Cytoplasm</keyword>
<keyword id="KW-0460">Magnesium</keyword>
<keyword id="KW-0547">Nucleotide-binding</keyword>
<keyword id="KW-0548">Nucleotidyltransferase</keyword>
<keyword id="KW-0808">Transferase</keyword>
<reference key="1">
    <citation type="journal article" date="2005" name="J. Infect. Dis.">
        <title>Genome sequence of a serotype M28 strain of group A Streptococcus: potential new insights into puerperal sepsis and bacterial disease specificity.</title>
        <authorList>
            <person name="Green N.M."/>
            <person name="Zhang S."/>
            <person name="Porcella S.F."/>
            <person name="Nagiec M.J."/>
            <person name="Barbian K.D."/>
            <person name="Beres S.B."/>
            <person name="Lefebvre R.B."/>
            <person name="Musser J.M."/>
        </authorList>
    </citation>
    <scope>NUCLEOTIDE SEQUENCE [LARGE SCALE GENOMIC DNA]</scope>
    <source>
        <strain>MGAS6180</strain>
    </source>
</reference>